<comment type="function">
    <text evidence="1">NDH-1 shuttles electrons from NADH, via FMN and iron-sulfur (Fe-S) centers, to quinones in the respiratory chain. The immediate electron acceptor for the enzyme in this species is believed to be ubiquinone. Couples the redox reaction to proton translocation (for every two electrons transferred, four hydrogen ions are translocated across the cytoplasmic membrane), and thus conserves the redox energy in a proton gradient.</text>
</comment>
<comment type="catalytic activity">
    <reaction evidence="1">
        <text>a quinone + NADH + 5 H(+)(in) = a quinol + NAD(+) + 4 H(+)(out)</text>
        <dbReference type="Rhea" id="RHEA:57888"/>
        <dbReference type="ChEBI" id="CHEBI:15378"/>
        <dbReference type="ChEBI" id="CHEBI:24646"/>
        <dbReference type="ChEBI" id="CHEBI:57540"/>
        <dbReference type="ChEBI" id="CHEBI:57945"/>
        <dbReference type="ChEBI" id="CHEBI:132124"/>
    </reaction>
</comment>
<comment type="subunit">
    <text evidence="1">NDH-1 is composed of 14 different subunits. Subunits NuoB, C, D, E, F, and G constitute the peripheral sector of the complex.</text>
</comment>
<comment type="subcellular location">
    <subcellularLocation>
        <location evidence="1">Cell inner membrane</location>
        <topology evidence="1">Peripheral membrane protein</topology>
        <orientation evidence="1">Cytoplasmic side</orientation>
    </subcellularLocation>
</comment>
<comment type="similarity">
    <text evidence="1">Belongs to the complex I 49 kDa subunit family.</text>
</comment>
<reference key="1">
    <citation type="journal article" date="2005" name="Proc. Natl. Acad. Sci. U.S.A.">
        <title>Complete genome sequencing of Anaplasma marginale reveals that the surface is skewed to two superfamilies of outer membrane proteins.</title>
        <authorList>
            <person name="Brayton K.A."/>
            <person name="Kappmeyer L.S."/>
            <person name="Herndon D.R."/>
            <person name="Dark M.J."/>
            <person name="Tibbals D.L."/>
            <person name="Palmer G.H."/>
            <person name="McGuire T.C."/>
            <person name="Knowles D.P. Jr."/>
        </authorList>
    </citation>
    <scope>NUCLEOTIDE SEQUENCE [LARGE SCALE GENOMIC DNA]</scope>
    <source>
        <strain>St. Maries</strain>
    </source>
</reference>
<accession>Q5PAR3</accession>
<organism>
    <name type="scientific">Anaplasma marginale (strain St. Maries)</name>
    <dbReference type="NCBI Taxonomy" id="234826"/>
    <lineage>
        <taxon>Bacteria</taxon>
        <taxon>Pseudomonadati</taxon>
        <taxon>Pseudomonadota</taxon>
        <taxon>Alphaproteobacteria</taxon>
        <taxon>Rickettsiales</taxon>
        <taxon>Anaplasmataceae</taxon>
        <taxon>Anaplasma</taxon>
    </lineage>
</organism>
<dbReference type="EC" id="7.1.1.-" evidence="1"/>
<dbReference type="EMBL" id="CP000030">
    <property type="protein sequence ID" value="AAV86617.1"/>
    <property type="molecule type" value="Genomic_DNA"/>
</dbReference>
<dbReference type="SMR" id="Q5PAR3"/>
<dbReference type="KEGG" id="ama:AM623"/>
<dbReference type="HOGENOM" id="CLU_015134_1_2_5"/>
<dbReference type="GO" id="GO:0005886">
    <property type="term" value="C:plasma membrane"/>
    <property type="evidence" value="ECO:0007669"/>
    <property type="project" value="UniProtKB-SubCell"/>
</dbReference>
<dbReference type="GO" id="GO:0051287">
    <property type="term" value="F:NAD binding"/>
    <property type="evidence" value="ECO:0007669"/>
    <property type="project" value="InterPro"/>
</dbReference>
<dbReference type="GO" id="GO:0050136">
    <property type="term" value="F:NADH:ubiquinone reductase (non-electrogenic) activity"/>
    <property type="evidence" value="ECO:0007669"/>
    <property type="project" value="UniProtKB-UniRule"/>
</dbReference>
<dbReference type="GO" id="GO:0048038">
    <property type="term" value="F:quinone binding"/>
    <property type="evidence" value="ECO:0007669"/>
    <property type="project" value="UniProtKB-KW"/>
</dbReference>
<dbReference type="FunFam" id="1.10.645.10:FF:000005">
    <property type="entry name" value="NADH-quinone oxidoreductase subunit D"/>
    <property type="match status" value="1"/>
</dbReference>
<dbReference type="Gene3D" id="1.10.645.10">
    <property type="entry name" value="Cytochrome-c3 Hydrogenase, chain B"/>
    <property type="match status" value="1"/>
</dbReference>
<dbReference type="HAMAP" id="MF_01358">
    <property type="entry name" value="NDH1_NuoD"/>
    <property type="match status" value="1"/>
</dbReference>
<dbReference type="InterPro" id="IPR001135">
    <property type="entry name" value="NADH_Q_OxRdtase_suD"/>
</dbReference>
<dbReference type="InterPro" id="IPR014029">
    <property type="entry name" value="NADH_UbQ_OxRdtase_49kDa_CS"/>
</dbReference>
<dbReference type="InterPro" id="IPR022885">
    <property type="entry name" value="NDH1_su_D/H"/>
</dbReference>
<dbReference type="InterPro" id="IPR029014">
    <property type="entry name" value="NiFe-Hase_large"/>
</dbReference>
<dbReference type="NCBIfam" id="TIGR01962">
    <property type="entry name" value="NuoD"/>
    <property type="match status" value="1"/>
</dbReference>
<dbReference type="NCBIfam" id="NF004739">
    <property type="entry name" value="PRK06075.1"/>
    <property type="match status" value="1"/>
</dbReference>
<dbReference type="PANTHER" id="PTHR11993:SF10">
    <property type="entry name" value="NADH DEHYDROGENASE [UBIQUINONE] IRON-SULFUR PROTEIN 2, MITOCHONDRIAL"/>
    <property type="match status" value="1"/>
</dbReference>
<dbReference type="PANTHER" id="PTHR11993">
    <property type="entry name" value="NADH-UBIQUINONE OXIDOREDUCTASE 49 KDA SUBUNIT"/>
    <property type="match status" value="1"/>
</dbReference>
<dbReference type="Pfam" id="PF00346">
    <property type="entry name" value="Complex1_49kDa"/>
    <property type="match status" value="1"/>
</dbReference>
<dbReference type="SUPFAM" id="SSF56762">
    <property type="entry name" value="HydB/Nqo4-like"/>
    <property type="match status" value="1"/>
</dbReference>
<dbReference type="PROSITE" id="PS00535">
    <property type="entry name" value="COMPLEX1_49K"/>
    <property type="match status" value="1"/>
</dbReference>
<keyword id="KW-0997">Cell inner membrane</keyword>
<keyword id="KW-1003">Cell membrane</keyword>
<keyword id="KW-0472">Membrane</keyword>
<keyword id="KW-0520">NAD</keyword>
<keyword id="KW-0874">Quinone</keyword>
<keyword id="KW-1278">Translocase</keyword>
<keyword id="KW-0813">Transport</keyword>
<keyword id="KW-0830">Ubiquinone</keyword>
<sequence>MLPMSDTRSSRIKPMTLNFGPQHPAAHGVMRLILEMSGEVIERIDPHIGLLHRGTEKLIEYKTYLQALPYFDRLDYVSPMSQEHAYSLCVEKLLQCVVPPRAKYIRVIFCELTRVLNHLLNVSSQALDTGATTPLLWMFEERERLLSFYERASGARFHAAYIRPGGIAADVPDGLLDDIHAFTESFPKLLDDVDGLLTENSIWKQRNVDIGVVSKAQALDWGFSGPMLRACGIPWDLRKSQPYEIYETLDFKVPVGSNGDCYDRYLVRMAEMRESISIIRQCLNGIPEGPVKTDDRKIAPPRREELKYSMEALIHHFKLFSEGYKVPEGEAYVAVEAPKGEFGVYIVSDGTNRPYRCRIRAPGFAHLQAIDAMARGHMLADLTAIIGSLDIVFGEIDR</sequence>
<proteinExistence type="inferred from homology"/>
<feature type="chain" id="PRO_0000357758" description="NADH-quinone oxidoreductase subunit D">
    <location>
        <begin position="1"/>
        <end position="398"/>
    </location>
</feature>
<evidence type="ECO:0000255" key="1">
    <source>
        <dbReference type="HAMAP-Rule" id="MF_01358"/>
    </source>
</evidence>
<name>NUOD_ANAMM</name>
<gene>
    <name evidence="1" type="primary">nuoD</name>
    <name type="ordered locus">AM623</name>
</gene>
<protein>
    <recommendedName>
        <fullName evidence="1">NADH-quinone oxidoreductase subunit D</fullName>
        <ecNumber evidence="1">7.1.1.-</ecNumber>
    </recommendedName>
    <alternativeName>
        <fullName evidence="1">NADH dehydrogenase I subunit D</fullName>
    </alternativeName>
    <alternativeName>
        <fullName evidence="1">NDH-1 subunit D</fullName>
    </alternativeName>
</protein>